<name>TAB2_HUMAN</name>
<evidence type="ECO:0000250" key="1">
    <source>
        <dbReference type="UniProtKB" id="Q99K90"/>
    </source>
</evidence>
<evidence type="ECO:0000255" key="2"/>
<evidence type="ECO:0000255" key="3">
    <source>
        <dbReference type="PROSITE-ProRule" id="PRU00322"/>
    </source>
</evidence>
<evidence type="ECO:0000255" key="4">
    <source>
        <dbReference type="PROSITE-ProRule" id="PRU00468"/>
    </source>
</evidence>
<evidence type="ECO:0000256" key="5">
    <source>
        <dbReference type="SAM" id="MobiDB-lite"/>
    </source>
</evidence>
<evidence type="ECO:0000269" key="6">
    <source>
    </source>
</evidence>
<evidence type="ECO:0000269" key="7">
    <source>
    </source>
</evidence>
<evidence type="ECO:0000269" key="8">
    <source>
    </source>
</evidence>
<evidence type="ECO:0000269" key="9">
    <source>
    </source>
</evidence>
<evidence type="ECO:0000269" key="10">
    <source>
    </source>
</evidence>
<evidence type="ECO:0000269" key="11">
    <source>
    </source>
</evidence>
<evidence type="ECO:0000269" key="12">
    <source>
    </source>
</evidence>
<evidence type="ECO:0000269" key="13">
    <source>
    </source>
</evidence>
<evidence type="ECO:0000269" key="14">
    <source>
    </source>
</evidence>
<evidence type="ECO:0000269" key="15">
    <source>
    </source>
</evidence>
<evidence type="ECO:0000269" key="16">
    <source>
    </source>
</evidence>
<evidence type="ECO:0000269" key="17">
    <source>
    </source>
</evidence>
<evidence type="ECO:0000269" key="18">
    <source>
    </source>
</evidence>
<evidence type="ECO:0000269" key="19">
    <source>
    </source>
</evidence>
<evidence type="ECO:0000269" key="20">
    <source>
    </source>
</evidence>
<evidence type="ECO:0000269" key="21">
    <source>
    </source>
</evidence>
<evidence type="ECO:0000269" key="22">
    <source>
    </source>
</evidence>
<evidence type="ECO:0000269" key="23">
    <source>
    </source>
</evidence>
<evidence type="ECO:0000269" key="24">
    <source>
    </source>
</evidence>
<evidence type="ECO:0000269" key="25">
    <source>
    </source>
</evidence>
<evidence type="ECO:0000269" key="26">
    <source>
    </source>
</evidence>
<evidence type="ECO:0000303" key="27">
    <source>
    </source>
</evidence>
<evidence type="ECO:0000303" key="28">
    <source>
    </source>
</evidence>
<evidence type="ECO:0000303" key="29">
    <source>
    </source>
</evidence>
<evidence type="ECO:0000303" key="30">
    <source>
    </source>
</evidence>
<evidence type="ECO:0000303" key="31">
    <source ref="5"/>
</evidence>
<evidence type="ECO:0000305" key="32"/>
<evidence type="ECO:0000305" key="33">
    <source>
    </source>
</evidence>
<evidence type="ECO:0000312" key="34">
    <source>
        <dbReference type="HGNC" id="HGNC:17075"/>
    </source>
</evidence>
<evidence type="ECO:0007744" key="35">
    <source>
    </source>
</evidence>
<evidence type="ECO:0007744" key="36">
    <source>
    </source>
</evidence>
<evidence type="ECO:0007744" key="37">
    <source>
    </source>
</evidence>
<evidence type="ECO:0007744" key="38">
    <source>
    </source>
</evidence>
<evidence type="ECO:0007744" key="39">
    <source>
    </source>
</evidence>
<evidence type="ECO:0007829" key="40">
    <source>
        <dbReference type="PDB" id="2DAE"/>
    </source>
</evidence>
<evidence type="ECO:0007829" key="41">
    <source>
        <dbReference type="PDB" id="2WWZ"/>
    </source>
</evidence>
<reference key="1">
    <citation type="journal article" date="2000" name="Mol. Cell">
        <title>TAB2, a novel adaptor protein, mediates activation of TAK1 MAPKKK by linking TAK1 to TRAF6 in the IL-1 signal transduction pathway.</title>
        <authorList>
            <person name="Takaesu G."/>
            <person name="Kishida S."/>
            <person name="Hiyama A."/>
            <person name="Yamaguchi K."/>
            <person name="Shibuya H."/>
            <person name="Irie K."/>
            <person name="Ninomiya-Tsuji J."/>
            <person name="Matsumoto K."/>
        </authorList>
    </citation>
    <scope>NUCLEOTIDE SEQUENCE [MRNA] (ISOFORM 1)</scope>
    <scope>TISSUE SPECIFICITY</scope>
    <scope>FUNCTION</scope>
    <scope>SUBCELLULAR LOCATION</scope>
    <scope>PHOSPHORYLATION</scope>
    <scope>INTERACTION WITH TAK1 AND TRAF6</scope>
    <source>
        <tissue>Kidney</tissue>
    </source>
</reference>
<reference key="2">
    <citation type="journal article" date="1998" name="DNA Res.">
        <title>Prediction of the coding sequences of unidentified human genes. XI. The complete sequences of 100 new cDNA clones from brain which code for large proteins in vitro.</title>
        <authorList>
            <person name="Nagase T."/>
            <person name="Ishikawa K."/>
            <person name="Suyama M."/>
            <person name="Kikuno R."/>
            <person name="Miyajima N."/>
            <person name="Tanaka A."/>
            <person name="Kotani H."/>
            <person name="Nomura N."/>
            <person name="Ohara O."/>
        </authorList>
    </citation>
    <scope>NUCLEOTIDE SEQUENCE [LARGE SCALE MRNA] (ISOFORM 1)</scope>
    <source>
        <tissue>Brain</tissue>
    </source>
</reference>
<reference key="3">
    <citation type="journal article" date="2002" name="DNA Res.">
        <title>Construction of expression-ready cDNA clones for KIAA genes: manual curation of 330 KIAA cDNA clones.</title>
        <authorList>
            <person name="Nakajima D."/>
            <person name="Okazaki N."/>
            <person name="Yamakawa H."/>
            <person name="Kikuno R."/>
            <person name="Ohara O."/>
            <person name="Nagase T."/>
        </authorList>
    </citation>
    <scope>SEQUENCE REVISION</scope>
</reference>
<reference key="4">
    <citation type="journal article" date="2004" name="Nat. Genet.">
        <title>Complete sequencing and characterization of 21,243 full-length human cDNAs.</title>
        <authorList>
            <person name="Ota T."/>
            <person name="Suzuki Y."/>
            <person name="Nishikawa T."/>
            <person name="Otsuki T."/>
            <person name="Sugiyama T."/>
            <person name="Irie R."/>
            <person name="Wakamatsu A."/>
            <person name="Hayashi K."/>
            <person name="Sato H."/>
            <person name="Nagai K."/>
            <person name="Kimura K."/>
            <person name="Makita H."/>
            <person name="Sekine M."/>
            <person name="Obayashi M."/>
            <person name="Nishi T."/>
            <person name="Shibahara T."/>
            <person name="Tanaka T."/>
            <person name="Ishii S."/>
            <person name="Yamamoto J."/>
            <person name="Saito K."/>
            <person name="Kawai Y."/>
            <person name="Isono Y."/>
            <person name="Nakamura Y."/>
            <person name="Nagahari K."/>
            <person name="Murakami K."/>
            <person name="Yasuda T."/>
            <person name="Iwayanagi T."/>
            <person name="Wagatsuma M."/>
            <person name="Shiratori A."/>
            <person name="Sudo H."/>
            <person name="Hosoiri T."/>
            <person name="Kaku Y."/>
            <person name="Kodaira H."/>
            <person name="Kondo H."/>
            <person name="Sugawara M."/>
            <person name="Takahashi M."/>
            <person name="Kanda K."/>
            <person name="Yokoi T."/>
            <person name="Furuya T."/>
            <person name="Kikkawa E."/>
            <person name="Omura Y."/>
            <person name="Abe K."/>
            <person name="Kamihara K."/>
            <person name="Katsuta N."/>
            <person name="Sato K."/>
            <person name="Tanikawa M."/>
            <person name="Yamazaki M."/>
            <person name="Ninomiya K."/>
            <person name="Ishibashi T."/>
            <person name="Yamashita H."/>
            <person name="Murakawa K."/>
            <person name="Fujimori K."/>
            <person name="Tanai H."/>
            <person name="Kimata M."/>
            <person name="Watanabe M."/>
            <person name="Hiraoka S."/>
            <person name="Chiba Y."/>
            <person name="Ishida S."/>
            <person name="Ono Y."/>
            <person name="Takiguchi S."/>
            <person name="Watanabe S."/>
            <person name="Yosida M."/>
            <person name="Hotuta T."/>
            <person name="Kusano J."/>
            <person name="Kanehori K."/>
            <person name="Takahashi-Fujii A."/>
            <person name="Hara H."/>
            <person name="Tanase T.-O."/>
            <person name="Nomura Y."/>
            <person name="Togiya S."/>
            <person name="Komai F."/>
            <person name="Hara R."/>
            <person name="Takeuchi K."/>
            <person name="Arita M."/>
            <person name="Imose N."/>
            <person name="Musashino K."/>
            <person name="Yuuki H."/>
            <person name="Oshima A."/>
            <person name="Sasaki N."/>
            <person name="Aotsuka S."/>
            <person name="Yoshikawa Y."/>
            <person name="Matsunawa H."/>
            <person name="Ichihara T."/>
            <person name="Shiohata N."/>
            <person name="Sano S."/>
            <person name="Moriya S."/>
            <person name="Momiyama H."/>
            <person name="Satoh N."/>
            <person name="Takami S."/>
            <person name="Terashima Y."/>
            <person name="Suzuki O."/>
            <person name="Nakagawa S."/>
            <person name="Senoh A."/>
            <person name="Mizoguchi H."/>
            <person name="Goto Y."/>
            <person name="Shimizu F."/>
            <person name="Wakebe H."/>
            <person name="Hishigaki H."/>
            <person name="Watanabe T."/>
            <person name="Sugiyama A."/>
            <person name="Takemoto M."/>
            <person name="Kawakami B."/>
            <person name="Yamazaki M."/>
            <person name="Watanabe K."/>
            <person name="Kumagai A."/>
            <person name="Itakura S."/>
            <person name="Fukuzumi Y."/>
            <person name="Fujimori Y."/>
            <person name="Komiyama M."/>
            <person name="Tashiro H."/>
            <person name="Tanigami A."/>
            <person name="Fujiwara T."/>
            <person name="Ono T."/>
            <person name="Yamada K."/>
            <person name="Fujii Y."/>
            <person name="Ozaki K."/>
            <person name="Hirao M."/>
            <person name="Ohmori Y."/>
            <person name="Kawabata A."/>
            <person name="Hikiji T."/>
            <person name="Kobatake N."/>
            <person name="Inagaki H."/>
            <person name="Ikema Y."/>
            <person name="Okamoto S."/>
            <person name="Okitani R."/>
            <person name="Kawakami T."/>
            <person name="Noguchi S."/>
            <person name="Itoh T."/>
            <person name="Shigeta K."/>
            <person name="Senba T."/>
            <person name="Matsumura K."/>
            <person name="Nakajima Y."/>
            <person name="Mizuno T."/>
            <person name="Morinaga M."/>
            <person name="Sasaki M."/>
            <person name="Togashi T."/>
            <person name="Oyama M."/>
            <person name="Hata H."/>
            <person name="Watanabe M."/>
            <person name="Komatsu T."/>
            <person name="Mizushima-Sugano J."/>
            <person name="Satoh T."/>
            <person name="Shirai Y."/>
            <person name="Takahashi Y."/>
            <person name="Nakagawa K."/>
            <person name="Okumura K."/>
            <person name="Nagase T."/>
            <person name="Nomura N."/>
            <person name="Kikuchi H."/>
            <person name="Masuho Y."/>
            <person name="Yamashita R."/>
            <person name="Nakai K."/>
            <person name="Yada T."/>
            <person name="Nakamura Y."/>
            <person name="Ohara O."/>
            <person name="Isogai T."/>
            <person name="Sugano S."/>
        </authorList>
    </citation>
    <scope>NUCLEOTIDE SEQUENCE [LARGE SCALE MRNA] (ISOFORM 2)</scope>
    <source>
        <tissue>Testis</tissue>
    </source>
</reference>
<reference key="5">
    <citation type="submission" date="2004-06" db="EMBL/GenBank/DDBJ databases">
        <title>Cloning of human full open reading frames in Gateway(TM) system entry vector (pDONR201).</title>
        <authorList>
            <person name="Ebert L."/>
            <person name="Schick M."/>
            <person name="Neubert P."/>
            <person name="Schatten R."/>
            <person name="Henze S."/>
            <person name="Korn B."/>
        </authorList>
    </citation>
    <scope>NUCLEOTIDE SEQUENCE [LARGE SCALE MRNA] (ISOFORM 2)</scope>
</reference>
<reference key="6">
    <citation type="journal article" date="2007" name="BMC Genomics">
        <title>The full-ORF clone resource of the German cDNA consortium.</title>
        <authorList>
            <person name="Bechtel S."/>
            <person name="Rosenfelder H."/>
            <person name="Duda A."/>
            <person name="Schmidt C.P."/>
            <person name="Ernst U."/>
            <person name="Wellenreuther R."/>
            <person name="Mehrle A."/>
            <person name="Schuster C."/>
            <person name="Bahr A."/>
            <person name="Bloecker H."/>
            <person name="Heubner D."/>
            <person name="Hoerlein A."/>
            <person name="Michel G."/>
            <person name="Wedler H."/>
            <person name="Koehrer K."/>
            <person name="Ottenwaelder B."/>
            <person name="Poustka A."/>
            <person name="Wiemann S."/>
            <person name="Schupp I."/>
        </authorList>
    </citation>
    <scope>NUCLEOTIDE SEQUENCE [LARGE SCALE MRNA] (ISOFORM 2)</scope>
    <source>
        <tissue>Testis</tissue>
    </source>
</reference>
<reference key="7">
    <citation type="submission" date="2005-12" db="EMBL/GenBank/DDBJ databases">
        <authorList>
            <consortium name="NHLBI resequencing and genotyping service (RS&amp;G)"/>
        </authorList>
    </citation>
    <scope>NUCLEOTIDE SEQUENCE [GENOMIC DNA]</scope>
</reference>
<reference key="8">
    <citation type="journal article" date="2003" name="Nature">
        <title>The DNA sequence and analysis of human chromosome 6.</title>
        <authorList>
            <person name="Mungall A.J."/>
            <person name="Palmer S.A."/>
            <person name="Sims S.K."/>
            <person name="Edwards C.A."/>
            <person name="Ashurst J.L."/>
            <person name="Wilming L."/>
            <person name="Jones M.C."/>
            <person name="Horton R."/>
            <person name="Hunt S.E."/>
            <person name="Scott C.E."/>
            <person name="Gilbert J.G.R."/>
            <person name="Clamp M.E."/>
            <person name="Bethel G."/>
            <person name="Milne S."/>
            <person name="Ainscough R."/>
            <person name="Almeida J.P."/>
            <person name="Ambrose K.D."/>
            <person name="Andrews T.D."/>
            <person name="Ashwell R.I.S."/>
            <person name="Babbage A.K."/>
            <person name="Bagguley C.L."/>
            <person name="Bailey J."/>
            <person name="Banerjee R."/>
            <person name="Barker D.J."/>
            <person name="Barlow K.F."/>
            <person name="Bates K."/>
            <person name="Beare D.M."/>
            <person name="Beasley H."/>
            <person name="Beasley O."/>
            <person name="Bird C.P."/>
            <person name="Blakey S.E."/>
            <person name="Bray-Allen S."/>
            <person name="Brook J."/>
            <person name="Brown A.J."/>
            <person name="Brown J.Y."/>
            <person name="Burford D.C."/>
            <person name="Burrill W."/>
            <person name="Burton J."/>
            <person name="Carder C."/>
            <person name="Carter N.P."/>
            <person name="Chapman J.C."/>
            <person name="Clark S.Y."/>
            <person name="Clark G."/>
            <person name="Clee C.M."/>
            <person name="Clegg S."/>
            <person name="Cobley V."/>
            <person name="Collier R.E."/>
            <person name="Collins J.E."/>
            <person name="Colman L.K."/>
            <person name="Corby N.R."/>
            <person name="Coville G.J."/>
            <person name="Culley K.M."/>
            <person name="Dhami P."/>
            <person name="Davies J."/>
            <person name="Dunn M."/>
            <person name="Earthrowl M.E."/>
            <person name="Ellington A.E."/>
            <person name="Evans K.A."/>
            <person name="Faulkner L."/>
            <person name="Francis M.D."/>
            <person name="Frankish A."/>
            <person name="Frankland J."/>
            <person name="French L."/>
            <person name="Garner P."/>
            <person name="Garnett J."/>
            <person name="Ghori M.J."/>
            <person name="Gilby L.M."/>
            <person name="Gillson C.J."/>
            <person name="Glithero R.J."/>
            <person name="Grafham D.V."/>
            <person name="Grant M."/>
            <person name="Gribble S."/>
            <person name="Griffiths C."/>
            <person name="Griffiths M.N.D."/>
            <person name="Hall R."/>
            <person name="Halls K.S."/>
            <person name="Hammond S."/>
            <person name="Harley J.L."/>
            <person name="Hart E.A."/>
            <person name="Heath P.D."/>
            <person name="Heathcott R."/>
            <person name="Holmes S.J."/>
            <person name="Howden P.J."/>
            <person name="Howe K.L."/>
            <person name="Howell G.R."/>
            <person name="Huckle E."/>
            <person name="Humphray S.J."/>
            <person name="Humphries M.D."/>
            <person name="Hunt A.R."/>
            <person name="Johnson C.M."/>
            <person name="Joy A.A."/>
            <person name="Kay M."/>
            <person name="Keenan S.J."/>
            <person name="Kimberley A.M."/>
            <person name="King A."/>
            <person name="Laird G.K."/>
            <person name="Langford C."/>
            <person name="Lawlor S."/>
            <person name="Leongamornlert D.A."/>
            <person name="Leversha M."/>
            <person name="Lloyd C.R."/>
            <person name="Lloyd D.M."/>
            <person name="Loveland J.E."/>
            <person name="Lovell J."/>
            <person name="Martin S."/>
            <person name="Mashreghi-Mohammadi M."/>
            <person name="Maslen G.L."/>
            <person name="Matthews L."/>
            <person name="McCann O.T."/>
            <person name="McLaren S.J."/>
            <person name="McLay K."/>
            <person name="McMurray A."/>
            <person name="Moore M.J.F."/>
            <person name="Mullikin J.C."/>
            <person name="Niblett D."/>
            <person name="Nickerson T."/>
            <person name="Novik K.L."/>
            <person name="Oliver K."/>
            <person name="Overton-Larty E.K."/>
            <person name="Parker A."/>
            <person name="Patel R."/>
            <person name="Pearce A.V."/>
            <person name="Peck A.I."/>
            <person name="Phillimore B.J.C.T."/>
            <person name="Phillips S."/>
            <person name="Plumb R.W."/>
            <person name="Porter K.M."/>
            <person name="Ramsey Y."/>
            <person name="Ranby S.A."/>
            <person name="Rice C.M."/>
            <person name="Ross M.T."/>
            <person name="Searle S.M."/>
            <person name="Sehra H.K."/>
            <person name="Sheridan E."/>
            <person name="Skuce C.D."/>
            <person name="Smith S."/>
            <person name="Smith M."/>
            <person name="Spraggon L."/>
            <person name="Squares S.L."/>
            <person name="Steward C.A."/>
            <person name="Sycamore N."/>
            <person name="Tamlyn-Hall G."/>
            <person name="Tester J."/>
            <person name="Theaker A.J."/>
            <person name="Thomas D.W."/>
            <person name="Thorpe A."/>
            <person name="Tracey A."/>
            <person name="Tromans A."/>
            <person name="Tubby B."/>
            <person name="Wall M."/>
            <person name="Wallis J.M."/>
            <person name="West A.P."/>
            <person name="White S.S."/>
            <person name="Whitehead S.L."/>
            <person name="Whittaker H."/>
            <person name="Wild A."/>
            <person name="Willey D.J."/>
            <person name="Wilmer T.E."/>
            <person name="Wood J.M."/>
            <person name="Wray P.W."/>
            <person name="Wyatt J.C."/>
            <person name="Young L."/>
            <person name="Younger R.M."/>
            <person name="Bentley D.R."/>
            <person name="Coulson A."/>
            <person name="Durbin R.M."/>
            <person name="Hubbard T."/>
            <person name="Sulston J.E."/>
            <person name="Dunham I."/>
            <person name="Rogers J."/>
            <person name="Beck S."/>
        </authorList>
    </citation>
    <scope>NUCLEOTIDE SEQUENCE [LARGE SCALE GENOMIC DNA]</scope>
</reference>
<reference key="9">
    <citation type="submission" date="2005-09" db="EMBL/GenBank/DDBJ databases">
        <authorList>
            <person name="Mural R.J."/>
            <person name="Istrail S."/>
            <person name="Sutton G.G."/>
            <person name="Florea L."/>
            <person name="Halpern A.L."/>
            <person name="Mobarry C.M."/>
            <person name="Lippert R."/>
            <person name="Walenz B."/>
            <person name="Shatkay H."/>
            <person name="Dew I."/>
            <person name="Miller J.R."/>
            <person name="Flanigan M.J."/>
            <person name="Edwards N.J."/>
            <person name="Bolanos R."/>
            <person name="Fasulo D."/>
            <person name="Halldorsson B.V."/>
            <person name="Hannenhalli S."/>
            <person name="Turner R."/>
            <person name="Yooseph S."/>
            <person name="Lu F."/>
            <person name="Nusskern D.R."/>
            <person name="Shue B.C."/>
            <person name="Zheng X.H."/>
            <person name="Zhong F."/>
            <person name="Delcher A.L."/>
            <person name="Huson D.H."/>
            <person name="Kravitz S.A."/>
            <person name="Mouchard L."/>
            <person name="Reinert K."/>
            <person name="Remington K.A."/>
            <person name="Clark A.G."/>
            <person name="Waterman M.S."/>
            <person name="Eichler E.E."/>
            <person name="Adams M.D."/>
            <person name="Hunkapiller M.W."/>
            <person name="Myers E.W."/>
            <person name="Venter J.C."/>
        </authorList>
    </citation>
    <scope>NUCLEOTIDE SEQUENCE [LARGE SCALE GENOMIC DNA]</scope>
</reference>
<reference key="10">
    <citation type="journal article" date="2004" name="Genome Res.">
        <title>The status, quality, and expansion of the NIH full-length cDNA project: the Mammalian Gene Collection (MGC).</title>
        <authorList>
            <consortium name="The MGC Project Team"/>
        </authorList>
    </citation>
    <scope>NUCLEOTIDE SEQUENCE [LARGE SCALE MRNA] (ISOFORM 1)</scope>
    <source>
        <tissue>Eye</tissue>
    </source>
</reference>
<reference key="11">
    <citation type="journal article" date="2001" name="Nature">
        <title>TAK1 is a ubiquitin-dependent kinase of MKK and IKK.</title>
        <authorList>
            <person name="Wang C."/>
            <person name="Deng L."/>
            <person name="Hong M."/>
            <person name="Akkaraju G.R."/>
            <person name="Inoue J."/>
            <person name="Chen Z.J."/>
        </authorList>
    </citation>
    <scope>FUNCTION</scope>
    <scope>SUBUNIT</scope>
    <scope>IDENTIFICATION IN THE TRIKA2 COMPLEX</scope>
</reference>
<reference key="12">
    <citation type="journal article" date="2003" name="EMBO J.">
        <title>Role of the TAB2-related protein TAB3 in IL-1 and TNF signaling.</title>
        <authorList>
            <person name="Ishitani T."/>
            <person name="Takaesu G."/>
            <person name="Ninomiya-Tsuji J."/>
            <person name="Shibuya H."/>
            <person name="Gaynor R.B."/>
            <person name="Matsumoto K."/>
        </authorList>
    </citation>
    <scope>UBIQUITINATION</scope>
    <source>
        <tissue>Kidney</tissue>
    </source>
</reference>
<reference key="13">
    <citation type="journal article" date="2004" name="Mol. Cell">
        <title>TAB2 and TAB3 activate the NF-kappaB pathway through binding to polyubiquitin chains.</title>
        <authorList>
            <person name="Kanayama A."/>
            <person name="Seth R.B."/>
            <person name="Sun L."/>
            <person name="Ea C.K."/>
            <person name="Hong M."/>
            <person name="Shaito A."/>
            <person name="Chiu Y.H."/>
            <person name="Deng L."/>
            <person name="Chen Z.J."/>
        </authorList>
    </citation>
    <scope>FUNCTION</scope>
</reference>
<reference key="14">
    <citation type="journal article" date="2007" name="J. Biol. Chem.">
        <title>RBCK1 negatively regulates tumor necrosis factor- and interleukin-1-triggered NF-kappaB activation by targeting TAB2/3 for degradation.</title>
        <authorList>
            <person name="Tian Y."/>
            <person name="Zhang Y."/>
            <person name="Zhong B."/>
            <person name="Wang Y.Y."/>
            <person name="Diao F.C."/>
            <person name="Wang R.P."/>
            <person name="Zhang M."/>
            <person name="Chen D.Y."/>
            <person name="Zhai Z.H."/>
            <person name="Shu H.B."/>
        </authorList>
    </citation>
    <scope>UBIQUITINATION</scope>
    <scope>INTERACTION WITH RBCK1</scope>
</reference>
<reference key="15">
    <citation type="journal article" date="2008" name="Cell. Signal.">
        <title>NUMBL interacts with TAB2 and inhibits TNFalpha and IL-1beta-induced NF-kappaB activation.</title>
        <authorList>
            <person name="Ma Q."/>
            <person name="Zhou L."/>
            <person name="Shi H."/>
            <person name="Huo K."/>
        </authorList>
    </citation>
    <scope>INTERACTION WITH NUMBL</scope>
</reference>
<reference key="16">
    <citation type="journal article" date="2008" name="EMBO J.">
        <title>A critical role of RICK/RIP2 polyubiquitination in Nod-induced NF-kappaB activation.</title>
        <authorList>
            <person name="Hasegawa M."/>
            <person name="Fujimoto Y."/>
            <person name="Lucas P.C."/>
            <person name="Nakano H."/>
            <person name="Fukase K."/>
            <person name="Nunez G."/>
            <person name="Inohara N."/>
        </authorList>
    </citation>
    <scope>FUNCTION</scope>
</reference>
<reference key="17">
    <citation type="journal article" date="2008" name="Proc. Natl. Acad. Sci. U.S.A.">
        <title>A quantitative atlas of mitotic phosphorylation.</title>
        <authorList>
            <person name="Dephoure N."/>
            <person name="Zhou C."/>
            <person name="Villen J."/>
            <person name="Beausoleil S.A."/>
            <person name="Bakalarski C.E."/>
            <person name="Elledge S.J."/>
            <person name="Gygi S.P."/>
        </authorList>
    </citation>
    <scope>PHOSPHORYLATION [LARGE SCALE ANALYSIS] AT SER-372</scope>
    <scope>IDENTIFICATION BY MASS SPECTROMETRY [LARGE SCALE ANALYSIS]</scope>
    <source>
        <tissue>Cervix carcinoma</tissue>
    </source>
</reference>
<reference key="18">
    <citation type="journal article" date="2009" name="Cell. Mol. Life Sci.">
        <title>WDR34 is a novel TAK1-associated suppressor of the IL-1R/TLR3/TLR4-induced NF-kappaB activation pathway.</title>
        <authorList>
            <person name="Gao D."/>
            <person name="Wang R."/>
            <person name="Li B."/>
            <person name="Yang Y."/>
            <person name="Zhai Z."/>
            <person name="Chen D.Y."/>
        </authorList>
    </citation>
    <scope>INTERACTION WITH DYNC2I2</scope>
</reference>
<reference key="19">
    <citation type="journal article" date="2009" name="Nature">
        <title>Direct activation of protein kinases by unanchored polyubiquitin chains.</title>
        <authorList>
            <person name="Xia Z.-P."/>
            <person name="Sun L."/>
            <person name="Chen X."/>
            <person name="Pineda G."/>
            <person name="Jiang X."/>
            <person name="Adhikari A."/>
            <person name="Zeng W."/>
            <person name="Chen Z.J."/>
        </authorList>
    </citation>
    <scope>INTERACTION WITH POLYUBIQUITIN</scope>
</reference>
<reference key="20">
    <citation type="journal article" date="2010" name="Am. J. Hum. Genet.">
        <title>Haploinsufficiency of TAB2 causes congenital heart defects in humans.</title>
        <authorList>
            <person name="Thienpont B."/>
            <person name="Zhang L."/>
            <person name="Postma A.V."/>
            <person name="Breckpot J."/>
            <person name="Tranchevent L.C."/>
            <person name="Van Loo P."/>
            <person name="Mollgard K."/>
            <person name="Tommerup N."/>
            <person name="Bache I."/>
            <person name="Tumer Z."/>
            <person name="van Engelen K."/>
            <person name="Menten B."/>
            <person name="Mortier G."/>
            <person name="Waggoner D."/>
            <person name="Gewillig M."/>
            <person name="Moreau Y."/>
            <person name="Devriendt K."/>
            <person name="Larsen L.A."/>
        </authorList>
    </citation>
    <scope>FUNCTION IN HEART DEVELOPMENT</scope>
    <scope>TISSUE SPECIFICITY</scope>
    <scope>VARIANTS CHTD2 SER-208 AND LYS-230</scope>
    <scope>CHROMOSOMAL TRANSLOCATION</scope>
</reference>
<reference key="21">
    <citation type="journal article" date="2010" name="Sci. Signal.">
        <title>Quantitative phosphoproteomics reveals widespread full phosphorylation site occupancy during mitosis.</title>
        <authorList>
            <person name="Olsen J.V."/>
            <person name="Vermeulen M."/>
            <person name="Santamaria A."/>
            <person name="Kumar C."/>
            <person name="Miller M.L."/>
            <person name="Jensen L.J."/>
            <person name="Gnad F."/>
            <person name="Cox J."/>
            <person name="Jensen T.S."/>
            <person name="Nigg E.A."/>
            <person name="Brunak S."/>
            <person name="Mann M."/>
        </authorList>
    </citation>
    <scope>PHOSPHORYLATION [LARGE SCALE ANALYSIS] AT SER-450 AND SER-524</scope>
    <scope>IDENTIFICATION BY MASS SPECTROMETRY [LARGE SCALE ANALYSIS]</scope>
    <source>
        <tissue>Cervix carcinoma</tissue>
    </source>
</reference>
<reference key="22">
    <citation type="journal article" date="2011" name="BMC Syst. Biol.">
        <title>Initial characterization of the human central proteome.</title>
        <authorList>
            <person name="Burkard T.R."/>
            <person name="Planyavsky M."/>
            <person name="Kaupe I."/>
            <person name="Breitwieser F.P."/>
            <person name="Buerckstuemmer T."/>
            <person name="Bennett K.L."/>
            <person name="Superti-Furga G."/>
            <person name="Colinge J."/>
        </authorList>
    </citation>
    <scope>IDENTIFICATION BY MASS SPECTROMETRY [LARGE SCALE ANALYSIS]</scope>
</reference>
<reference key="23">
    <citation type="journal article" date="2011" name="Nature">
        <title>Cysteine methylation disrupts ubiquitin-chain sensing in NF-kappaB activation.</title>
        <authorList>
            <person name="Zhang L."/>
            <person name="Ding X."/>
            <person name="Cui J."/>
            <person name="Xu H."/>
            <person name="Chen J."/>
            <person name="Gong Y.N."/>
            <person name="Hu L."/>
            <person name="Zhou Y."/>
            <person name="Ge J."/>
            <person name="Lu Q."/>
            <person name="Liu L."/>
            <person name="Chen S."/>
            <person name="Shao F."/>
        </authorList>
    </citation>
    <scope>FUNCTION</scope>
    <scope>DOMAIN</scope>
    <scope>METHYLATION AT CYS-673 (MICROBIAL INFECTION)</scope>
    <scope>MUTAGENESIS OF CYS-670; CYS-673; CYS-684 AND CYS-687</scope>
</reference>
<reference key="24">
    <citation type="journal article" date="2011" name="Nature">
        <title>TRIM5 is an innate immune sensor for the retrovirus capsid lattice.</title>
        <authorList>
            <person name="Pertel T."/>
            <person name="Hausmann S."/>
            <person name="Morger D."/>
            <person name="Zueger S."/>
            <person name="Guerra J."/>
            <person name="Lascano J."/>
            <person name="Reinhard C."/>
            <person name="Santoni F.A."/>
            <person name="Uchil P.D."/>
            <person name="Chatel L."/>
            <person name="Bisiaux A."/>
            <person name="Albert M.L."/>
            <person name="Strambio-De-Castillia C."/>
            <person name="Mothes W."/>
            <person name="Pizzato M."/>
            <person name="Gruetter M.G."/>
            <person name="Luban J."/>
        </authorList>
    </citation>
    <scope>INTERACTION WITH TRIM5</scope>
</reference>
<reference key="25">
    <citation type="journal article" date="2013" name="J. Proteome Res.">
        <title>Toward a comprehensive characterization of a human cancer cell phosphoproteome.</title>
        <authorList>
            <person name="Zhou H."/>
            <person name="Di Palma S."/>
            <person name="Preisinger C."/>
            <person name="Peng M."/>
            <person name="Polat A.N."/>
            <person name="Heck A.J."/>
            <person name="Mohammed S."/>
        </authorList>
    </citation>
    <scope>PHOSPHORYLATION [LARGE SCALE ANALYSIS] AT SER-450 AND SER-582</scope>
    <scope>IDENTIFICATION BY MASS SPECTROMETRY [LARGE SCALE ANALYSIS]</scope>
    <source>
        <tissue>Cervix carcinoma</tissue>
        <tissue>Erythroleukemia</tissue>
    </source>
</reference>
<reference key="26">
    <citation type="journal article" date="2014" name="J. Proteomics">
        <title>An enzyme assisted RP-RPLC approach for in-depth analysis of human liver phosphoproteome.</title>
        <authorList>
            <person name="Bian Y."/>
            <person name="Song C."/>
            <person name="Cheng K."/>
            <person name="Dong M."/>
            <person name="Wang F."/>
            <person name="Huang J."/>
            <person name="Sun D."/>
            <person name="Wang L."/>
            <person name="Ye M."/>
            <person name="Zou H."/>
        </authorList>
    </citation>
    <scope>PHOSPHORYLATION [LARGE SCALE ANALYSIS] AT SER-482</scope>
    <scope>IDENTIFICATION BY MASS SPECTROMETRY [LARGE SCALE ANALYSIS]</scope>
    <source>
        <tissue>Liver</tissue>
    </source>
</reference>
<reference key="27">
    <citation type="journal article" date="2014" name="Mol. Cell. Proteomics">
        <title>Immunoaffinity enrichment and mass spectrometry analysis of protein methylation.</title>
        <authorList>
            <person name="Guo A."/>
            <person name="Gu H."/>
            <person name="Zhou J."/>
            <person name="Mulhern D."/>
            <person name="Wang Y."/>
            <person name="Lee K.A."/>
            <person name="Yang V."/>
            <person name="Aguiar M."/>
            <person name="Kornhauser J."/>
            <person name="Jia X."/>
            <person name="Ren J."/>
            <person name="Beausoleil S.A."/>
            <person name="Silva J.C."/>
            <person name="Vemulapalli V."/>
            <person name="Bedford M.T."/>
            <person name="Comb M.J."/>
        </authorList>
    </citation>
    <scope>METHYLATION [LARGE SCALE ANALYSIS] AT ARG-173</scope>
    <scope>IDENTIFICATION BY MASS SPECTROMETRY [LARGE SCALE ANALYSIS]</scope>
    <source>
        <tissue>Colon carcinoma</tissue>
    </source>
</reference>
<reference key="28">
    <citation type="journal article" date="2014" name="PLoS Pathog.">
        <title>Structure and specificity of the bacterial cysteine methyltransferase effector NleE suggests a novel substrate in human DNA repair pathway.</title>
        <authorList>
            <person name="Yao Q."/>
            <person name="Zhang L."/>
            <person name="Wan X."/>
            <person name="Chen J."/>
            <person name="Hu L."/>
            <person name="Ding X."/>
            <person name="Li L."/>
            <person name="Karar J."/>
            <person name="Peng H."/>
            <person name="Chen S."/>
            <person name="Huang N."/>
            <person name="Rauscher F.J. III"/>
            <person name="Shao F."/>
        </authorList>
    </citation>
    <scope>METHYLATION AT CYS-673 (MICROBIAL INFECTION)</scope>
</reference>
<reference key="29">
    <citation type="journal article" date="2014" name="Proc. Natl. Acad. Sci. U.S.A.">
        <title>TRIM38 inhibits TNFalpha- and IL-1beta-triggered NF-kappaB activation by mediating lysosome-dependent degradation of TAB2/3.</title>
        <authorList>
            <person name="Hu M.M."/>
            <person name="Yang Q."/>
            <person name="Zhang J."/>
            <person name="Liu S.M."/>
            <person name="Zhang Y."/>
            <person name="Lin H."/>
            <person name="Huang Z.F."/>
            <person name="Wang Y.Y."/>
            <person name="Zhang X.D."/>
            <person name="Zhong B."/>
            <person name="Shu H.B."/>
        </authorList>
    </citation>
    <scope>SUBCELLULAR LOCATION</scope>
    <scope>DEGRADATION</scope>
    <scope>INTERACTION WITH TRIM38</scope>
</reference>
<reference key="30">
    <citation type="journal article" date="2016" name="J. Biol. Chem.">
        <title>Identification of a distinct substrate-binding domain in the bacterial cysteine methyltransferase effectors NleE and OspZ.</title>
        <authorList>
            <person name="Zhang Y."/>
            <person name="Muehlen S."/>
            <person name="Oates C.V."/>
            <person name="Pearson J.S."/>
            <person name="Hartland E.L."/>
        </authorList>
    </citation>
    <scope>METHYLATION (MICROBIAL INFECTION)</scope>
</reference>
<reference key="31">
    <citation type="journal article" date="2016" name="Mol. Cell">
        <title>The K48-K63 branched ubiquitin chain regulates NF-kappaB signaling.</title>
        <authorList>
            <person name="Ohtake F."/>
            <person name="Saeki Y."/>
            <person name="Ishido S."/>
            <person name="Kanno J."/>
            <person name="Tanaka K."/>
        </authorList>
    </citation>
    <scope>FUNCTION</scope>
</reference>
<reference key="32">
    <citation type="journal article" date="2021" name="Cell. Mol. Immunol.">
        <title>The SUMOylation of TAB2 mediated by TRIM60 inhibits MAPK/NF-kappaB activation and the innate immune response.</title>
        <authorList>
            <person name="Gu Z."/>
            <person name="Chen X."/>
            <person name="Yang W."/>
            <person name="Qi Y."/>
            <person name="Yu H."/>
            <person name="Wang X."/>
            <person name="Gong Y."/>
            <person name="Chen Q."/>
            <person name="Zhong B."/>
            <person name="Dai L."/>
            <person name="Qi S."/>
            <person name="Zhang Z."/>
            <person name="Zhang H."/>
            <person name="Hu H."/>
        </authorList>
    </citation>
    <scope>FUNCTION</scope>
    <scope>SUMOYLATION AT LYS-329 AND LYS-562</scope>
    <scope>MUTAGENESIS OF LYS-329 AND LYS-562</scope>
</reference>
<reference key="33">
    <citation type="journal article" date="2021" name="Proc. Natl. Acad. Sci. U.S.A.">
        <title>An unconventional role of an ASB family protein in NF-kappaB activation and inflammatory response during microbial infection and colitis.</title>
        <authorList>
            <person name="Hou P."/>
            <person name="Jia P."/>
            <person name="Yang K."/>
            <person name="Li Z."/>
            <person name="Tian T."/>
            <person name="Lin Y."/>
            <person name="Zeng W."/>
            <person name="Xing F."/>
            <person name="Chen Y."/>
            <person name="Li C."/>
            <person name="Liu Y."/>
            <person name="Guo D."/>
        </authorList>
    </citation>
    <scope>INTERACTION WITH ASB1</scope>
</reference>
<reference key="34">
    <citation type="journal article" date="2023" name="Cell Death Differ.">
        <title>E3 ligase RNF99 negatively regulates TLR-mediated inflammatory immune response via K48-linked ubiquitination of TAB2.</title>
        <authorList>
            <person name="Zhang J."/>
            <person name="Cao L."/>
            <person name="Gao A."/>
            <person name="Ren R."/>
            <person name="Yu L."/>
            <person name="Li Q."/>
            <person name="Liu Y."/>
            <person name="Qi W."/>
            <person name="Hou Y."/>
            <person name="Sui W."/>
            <person name="Su G."/>
            <person name="Zhang Y."/>
            <person name="Zhang C."/>
            <person name="Zhang M."/>
        </authorList>
    </citation>
    <scope>FUNCTION</scope>
    <scope>UBIQUITINATION AT LYS-611</scope>
    <scope>MUTAGENESIS OF LYS-611</scope>
    <scope>SUBCELLULAR LOCATION</scope>
</reference>
<reference key="35">
    <citation type="submission" date="2007-02" db="PDB data bank">
        <title>Solution structure of the N-terminal CUE domain in the human mitogen-activated protein kinase kinase kinase 7-interacting protein 2 (MAP3K7IP2).</title>
        <authorList>
            <consortium name="RIKEN structural genomics initiative (RSGI)"/>
        </authorList>
    </citation>
    <scope>STRUCTURE BY NMR OF 5-70</scope>
</reference>
<reference key="36">
    <citation type="journal article" date="2009" name="Nat. Struct. Mol. Biol.">
        <title>Two-sided ubiquitin binding explains specificity of the TAB2 NZF domain.</title>
        <authorList>
            <person name="Kulathu Y."/>
            <person name="Akutsu M."/>
            <person name="Bremm A."/>
            <person name="Hofmann K."/>
            <person name="Komander D."/>
        </authorList>
    </citation>
    <scope>X-RAY CRYSTALLOGRAPHY (1.4 ANGSTROMS) OF 662-693 IN COMPLEX WITH POLYUBIQUITIN CHAINS</scope>
    <scope>MUTAGENESIS OF PHE-675; HIS-678; LEU-681 AND GLU-685</scope>
    <scope>SUBUNIT</scope>
</reference>
<reference key="37">
    <citation type="journal article" date="2016" name="Am. J. Hum. Genet.">
        <title>Mutations in MAP3K7 that alter the activity of the TAK1 signaling complex cause frontometaphyseal dysplasia.</title>
        <authorList>
            <person name="Wade E.M."/>
            <person name="Daniel P.B."/>
            <person name="Jenkins Z.A."/>
            <person name="McInerney-Leo A."/>
            <person name="Leo P."/>
            <person name="Morgan T."/>
            <person name="Addor M.C."/>
            <person name="Ades L.C."/>
            <person name="Bertola D."/>
            <person name="Bohring A."/>
            <person name="Carter E."/>
            <person name="Cho T.J."/>
            <person name="Duba H.C."/>
            <person name="Fletcher E."/>
            <person name="Kim C.A."/>
            <person name="Krakow D."/>
            <person name="Morava E."/>
            <person name="Neuhann T."/>
            <person name="Superti-Furga A."/>
            <person name="Veenstra-Knol I."/>
            <person name="Wieczorek D."/>
            <person name="Wilson L.C."/>
            <person name="Hennekam R.C."/>
            <person name="Sutherland-Smith A.J."/>
            <person name="Strom T.M."/>
            <person name="Wilkie A.O."/>
            <person name="Brown M.A."/>
            <person name="Duncan E.L."/>
            <person name="Markie D.M."/>
            <person name="Robertson S.P."/>
        </authorList>
    </citation>
    <scope>VARIANT LYS-569</scope>
</reference>
<comment type="function">
    <text evidence="1 6 7 9 11 16 18 23 24 26">Adapter required to activate the JNK and NF-kappa-B signaling pathways through the specific recognition of 'Lys-63'-linked polyubiquitin chains by its RanBP2-type zinc finger (NZF) (PubMed:10882101, PubMed:11460167, PubMed:15327770, PubMed:22158122, PubMed:27746020, PubMed:33184450, PubMed:36681779). Acts as an adapter linking MAP3K7/TAK1 and TRAF6 to 'Lys-63'-linked polyubiquitin chains (PubMed:10882101, PubMed:11460167, PubMed:15327770, PubMed:22158122, PubMed:27746020). The RanBP2-type zinc finger (NZF) specifically recognizes Lys-63'-linked polyubiquitin chains unanchored or anchored to the substrate proteins such as RIPK1/RIP1 and RIPK2: this acts as a scaffold to organize a large signaling complex to promote autophosphorylation of MAP3K7/TAK1, and subsequent activation of I-kappa-B-kinase (IKK) core complex by MAP3K7/TAK1 (PubMed:15327770, PubMed:18079694, PubMed:22158122). Also recognizes and binds Lys-63'-linked polyubiquitin chains of heterotypic 'Lys-63'-/'Lys-48'-linked branched ubiquitin chains (PubMed:27746020). Regulates the IL1-mediated translocation of NCOR1 out of the nucleus (By similarity). Involved in heart development (PubMed:20493459).</text>
</comment>
<comment type="subunit">
    <text evidence="1 6 7 10 12 13 14 15 17 19 25">Interacts with MAP3K7 and TRAF6 (PubMed:10882101). Identified in the TRIKA2 complex composed of MAP3K7, TAB1 and TAB2 (PubMed:11460167). Binds 'Lys-63'-linked polyubiquitin chains (PubMed:19675569, PubMed:19935683). Interacts with NCOR1 and HDAC3 to form a ternary complex (By similarity). Interacts (via C-terminal) with NUMBL (via PTB domain) (PubMed:18299187). Interacts (via the C-terminus) with DYNC2I2 (via WD domains) (PubMed:19521662). Interacts with RBCK1 (PubMed:17449468). Interacts with TRIM5 (PubMed:21512573). Interacts with TRIM38 (via B30.2/SPRY domain), leading to its translocation to lysosomes and degradation (PubMed:24434549). Interacts with ASB1; this interaction promotes TAB2 stability (PubMed:33431678).</text>
</comment>
<comment type="interaction">
    <interactant intactId="EBI-358708">
        <id>Q9NYJ8</id>
    </interactant>
    <interactant intactId="EBI-949378">
        <id>Q14457</id>
        <label>BECN1</label>
    </interactant>
    <organismsDiffer>false</organismsDiffer>
    <experiments>11</experiments>
</comment>
<comment type="interaction">
    <interactant intactId="EBI-358708">
        <id>Q9NYJ8</id>
    </interactant>
    <interactant intactId="EBI-1383687">
        <id>Q9UQM7</id>
        <label>CAMK2A</label>
    </interactant>
    <organismsDiffer>false</organismsDiffer>
    <experiments>5</experiments>
</comment>
<comment type="interaction">
    <interactant intactId="EBI-358708">
        <id>Q9NYJ8</id>
    </interactant>
    <interactant intactId="EBI-11748557">
        <id>Q9Y6C2-2</id>
        <label>EMILIN1</label>
    </interactant>
    <organismsDiffer>false</organismsDiffer>
    <experiments>3</experiments>
</comment>
<comment type="interaction">
    <interactant intactId="EBI-358708">
        <id>Q9NYJ8</id>
    </interactant>
    <interactant intactId="EBI-744510">
        <id>P15407</id>
        <label>FOSL1</label>
    </interactant>
    <organismsDiffer>false</organismsDiffer>
    <experiments>4</experiments>
</comment>
<comment type="interaction">
    <interactant intactId="EBI-358708">
        <id>Q9NYJ8</id>
    </interactant>
    <interactant intactId="EBI-618309">
        <id>Q08379</id>
        <label>GOLGA2</label>
    </interactant>
    <organismsDiffer>false</organismsDiffer>
    <experiments>3</experiments>
</comment>
<comment type="interaction">
    <interactant intactId="EBI-358708">
        <id>Q9NYJ8</id>
    </interactant>
    <interactant intactId="EBI-7116203">
        <id>O75031</id>
        <label>HSF2BP</label>
    </interactant>
    <organismsDiffer>false</organismsDiffer>
    <experiments>3</experiments>
</comment>
<comment type="interaction">
    <interactant intactId="EBI-358708">
        <id>Q9NYJ8</id>
    </interactant>
    <interactant intactId="EBI-1049371">
        <id>P78386</id>
        <label>KRT85</label>
    </interactant>
    <organismsDiffer>false</organismsDiffer>
    <experiments>3</experiments>
</comment>
<comment type="interaction">
    <interactant intactId="EBI-358708">
        <id>Q9NYJ8</id>
    </interactant>
    <interactant intactId="EBI-358684">
        <id>O43318</id>
        <label>MAP3K7</label>
    </interactant>
    <organismsDiffer>false</organismsDiffer>
    <experiments>8</experiments>
</comment>
<comment type="interaction">
    <interactant intactId="EBI-358708">
        <id>Q9NYJ8</id>
    </interactant>
    <interactant intactId="EBI-358700">
        <id>O43318-2</id>
        <label>MAP3K7</label>
    </interactant>
    <organismsDiffer>false</organismsDiffer>
    <experiments>2</experiments>
</comment>
<comment type="interaction">
    <interactant intactId="EBI-358708">
        <id>Q9NYJ8</id>
    </interactant>
    <interactant intactId="EBI-358643">
        <id>Q15750</id>
        <label>TAB1</label>
    </interactant>
    <organismsDiffer>false</organismsDiffer>
    <experiments>9</experiments>
</comment>
<comment type="interaction">
    <interactant intactId="EBI-358708">
        <id>Q9NYJ8</id>
    </interactant>
    <interactant intactId="EBI-1051794">
        <id>Q9UKE5</id>
        <label>TNIK</label>
    </interactant>
    <organismsDiffer>false</organismsDiffer>
    <experiments>3</experiments>
</comment>
<comment type="interaction">
    <interactant intactId="EBI-358708">
        <id>Q9NYJ8</id>
    </interactant>
    <interactant intactId="EBI-355607">
        <id>P06753</id>
        <label>TPM3</label>
    </interactant>
    <organismsDiffer>false</organismsDiffer>
    <experiments>3</experiments>
</comment>
<comment type="interaction">
    <interactant intactId="EBI-358708">
        <id>Q9NYJ8</id>
    </interactant>
    <interactant intactId="EBI-359276">
        <id>Q9Y4K3</id>
        <label>TRAF6</label>
    </interactant>
    <organismsDiffer>false</organismsDiffer>
    <experiments>3</experiments>
</comment>
<comment type="interaction">
    <interactant intactId="EBI-358708">
        <id>Q9NYJ8</id>
    </interactant>
    <interactant intactId="EBI-2799833">
        <id>Q8N1B4</id>
        <label>VPS52</label>
    </interactant>
    <organismsDiffer>false</organismsDiffer>
    <experiments>3</experiments>
</comment>
<comment type="interaction">
    <interactant intactId="EBI-358708">
        <id>Q9NYJ8</id>
    </interactant>
    <interactant intactId="EBI-711925">
        <id>Q05516</id>
        <label>ZBTB16</label>
    </interactant>
    <organismsDiffer>false</organismsDiffer>
    <experiments>3</experiments>
</comment>
<comment type="interaction">
    <interactant intactId="EBI-358708">
        <id>Q9NYJ8</id>
    </interactant>
    <interactant intactId="EBI-23201521">
        <id>Q9NTW7-5</id>
        <label>ZFP64</label>
    </interactant>
    <organismsDiffer>false</organismsDiffer>
    <experiments>3</experiments>
</comment>
<comment type="interaction">
    <interactant intactId="EBI-358708">
        <id>Q9NYJ8</id>
    </interactant>
    <interactant intactId="EBI-2849334">
        <id>P52747</id>
        <label>ZNF143</label>
    </interactant>
    <organismsDiffer>false</organismsDiffer>
    <experiments>3</experiments>
</comment>
<comment type="interaction">
    <interactant intactId="EBI-358708">
        <id>Q9NYJ8</id>
    </interactant>
    <interactant intactId="EBI-1775345">
        <id>Q62073</id>
        <label>Map3k7</label>
    </interactant>
    <organismsDiffer>true</organismsDiffer>
    <experiments>2</experiments>
</comment>
<comment type="interaction">
    <interactant intactId="EBI-358708">
        <id>Q9NYJ8</id>
    </interactant>
    <interactant intactId="EBI-15957770">
        <id>B7UI22</id>
        <label>nleE</label>
    </interactant>
    <organismsDiffer>true</organismsDiffer>
    <experiments>5</experiments>
</comment>
<comment type="subcellular location">
    <subcellularLocation>
        <location evidence="6 19">Membrane</location>
        <topology evidence="6">Peripheral membrane protein</topology>
    </subcellularLocation>
    <subcellularLocation>
        <location evidence="19">Endosome membrane</location>
        <topology evidence="6">Peripheral membrane protein</topology>
    </subcellularLocation>
    <subcellularLocation>
        <location evidence="19">Lysosome membrane</location>
        <topology evidence="6">Peripheral membrane protein</topology>
    </subcellularLocation>
    <subcellularLocation>
        <location evidence="6 19 26">Cytoplasm</location>
        <location evidence="6 19 26">Cytosol</location>
    </subcellularLocation>
    <text evidence="6 19">Following IL1 stimulation, translocation occurs from the membrane to cytosol (PubMed:10882101). Interaction with TRIM38 promotes translocation from cytosol to endosome and lysosome (PubMed:24434549).</text>
</comment>
<comment type="alternative products">
    <event type="alternative splicing"/>
    <isoform>
        <id>Q9NYJ8-1</id>
        <name>1</name>
        <sequence type="displayed"/>
    </isoform>
    <isoform>
        <id>Q9NYJ8-2</id>
        <name>2</name>
        <sequence type="described" ref="VSP_017419 VSP_017420"/>
    </isoform>
</comment>
<comment type="tissue specificity">
    <text evidence="6 16">Widely expressed. In the embryo, expressed in the ventricular trabeculae, endothelial cells of the conotruncal cushions of the outflow tract and in the endothelial cells lining the developing aortic valves.</text>
</comment>
<comment type="domain">
    <text evidence="15 18">The RanBP2-type zinc finger (NZF) mediates binding to two consecutive 'Lys-63'-linked ubiquitins.</text>
</comment>
<comment type="PTM">
    <text evidence="19">Degraded in a lysosome-dependent manner following interaction with TRIM38.</text>
</comment>
<comment type="PTM">
    <text evidence="24">SUMOylated by TRIM60; leading to inhibition of MAPK/NF-kappaB activation and the innate immune response.</text>
</comment>
<comment type="PTM">
    <text evidence="8 10 26">Ubiquitinated; following IL1 stimulation or TRAF6 overexpression. Ubiquitination involves RBCK1 leading to proteasomal degradation. Ubiquitinated at Lys-611 by TRIM45 leading to proteasomal degradation (PubMed:36681779).</text>
</comment>
<comment type="PTM">
    <text evidence="33">Phosphorylated.</text>
</comment>
<comment type="PTM">
    <text evidence="18 20 22">(Microbial infection) Methylated at Cys-673 by enteropathogenic E.coli protein NleE or S.flexneri protein OspZ: methylation disrupts zinc-binding and ability to bind 'Lys-63'-linked ubiquitin, leading to NF-kappa-B inactivation.</text>
</comment>
<comment type="disease" evidence="16">
    <disease id="DI-02853">
        <name>Congenital heart defects, multiple types, 2</name>
        <acronym>CHTD2</acronym>
        <description>A disease characterized by congenital developmental abnormalities involving structures of the heart. CHTD2 patients have left ventricular outflow tract obstruction, subaortic stenosis, residual aortic regurgitation, atrial fibrillation, bicuspid aortic valve and aortic dilation.</description>
        <dbReference type="MIM" id="614980"/>
    </disease>
    <text>The disease is caused by variants affecting the gene represented in this entry. A chromosomal aberration involving TAB2 has been found in a family with congenital heart disease. Translocation t(2;6)(q21;q25).</text>
</comment>
<comment type="sequence caution" evidence="32">
    <conflict type="erroneous initiation">
        <sequence resource="EMBL-CDS" id="BAA34453"/>
    </conflict>
</comment>
<organism>
    <name type="scientific">Homo sapiens</name>
    <name type="common">Human</name>
    <dbReference type="NCBI Taxonomy" id="9606"/>
    <lineage>
        <taxon>Eukaryota</taxon>
        <taxon>Metazoa</taxon>
        <taxon>Chordata</taxon>
        <taxon>Craniata</taxon>
        <taxon>Vertebrata</taxon>
        <taxon>Euteleostomi</taxon>
        <taxon>Mammalia</taxon>
        <taxon>Eutheria</taxon>
        <taxon>Euarchontoglires</taxon>
        <taxon>Primates</taxon>
        <taxon>Haplorrhini</taxon>
        <taxon>Catarrhini</taxon>
        <taxon>Hominidae</taxon>
        <taxon>Homo</taxon>
    </lineage>
</organism>
<gene>
    <name evidence="27 34" type="primary">TAB2</name>
    <name evidence="30" type="synonym">KIAA0733</name>
    <name type="synonym">MAP3K7IP2</name>
</gene>
<dbReference type="EMBL" id="AF241230">
    <property type="protein sequence ID" value="AAF67176.1"/>
    <property type="molecule type" value="mRNA"/>
</dbReference>
<dbReference type="EMBL" id="AB018276">
    <property type="protein sequence ID" value="BAA34453.2"/>
    <property type="status" value="ALT_INIT"/>
    <property type="molecule type" value="mRNA"/>
</dbReference>
<dbReference type="EMBL" id="AK315038">
    <property type="protein sequence ID" value="BAG37521.1"/>
    <property type="molecule type" value="mRNA"/>
</dbReference>
<dbReference type="EMBL" id="CR457387">
    <property type="protein sequence ID" value="CAG33668.1"/>
    <property type="molecule type" value="mRNA"/>
</dbReference>
<dbReference type="EMBL" id="DQ314877">
    <property type="protein sequence ID" value="ABC40736.1"/>
    <property type="molecule type" value="Genomic_DNA"/>
</dbReference>
<dbReference type="EMBL" id="AL117407">
    <property type="protein sequence ID" value="CAB55907.1"/>
    <property type="molecule type" value="mRNA"/>
</dbReference>
<dbReference type="EMBL" id="AL031133">
    <property type="status" value="NOT_ANNOTATED_CDS"/>
    <property type="molecule type" value="Genomic_DNA"/>
</dbReference>
<dbReference type="EMBL" id="AL139103">
    <property type="status" value="NOT_ANNOTATED_CDS"/>
    <property type="molecule type" value="Genomic_DNA"/>
</dbReference>
<dbReference type="EMBL" id="AL138727">
    <property type="status" value="NOT_ANNOTATED_CDS"/>
    <property type="molecule type" value="Genomic_DNA"/>
</dbReference>
<dbReference type="EMBL" id="CH471051">
    <property type="protein sequence ID" value="EAW47805.1"/>
    <property type="molecule type" value="Genomic_DNA"/>
</dbReference>
<dbReference type="EMBL" id="CH471051">
    <property type="protein sequence ID" value="EAW47806.1"/>
    <property type="molecule type" value="Genomic_DNA"/>
</dbReference>
<dbReference type="EMBL" id="CH471051">
    <property type="protein sequence ID" value="EAW47807.1"/>
    <property type="molecule type" value="Genomic_DNA"/>
</dbReference>
<dbReference type="EMBL" id="BC035910">
    <property type="protein sequence ID" value="AAH35910.1"/>
    <property type="molecule type" value="mRNA"/>
</dbReference>
<dbReference type="CCDS" id="CCDS5214.1">
    <molecule id="Q9NYJ8-1"/>
</dbReference>
<dbReference type="PIR" id="T17217">
    <property type="entry name" value="T17217"/>
</dbReference>
<dbReference type="RefSeq" id="NP_001278963.1">
    <molecule id="Q9NYJ8-1"/>
    <property type="nucleotide sequence ID" value="NM_001292034.3"/>
</dbReference>
<dbReference type="RefSeq" id="NP_001278964.1">
    <property type="nucleotide sequence ID" value="NM_001292035.2"/>
</dbReference>
<dbReference type="RefSeq" id="NP_001356435.1">
    <molecule id="Q9NYJ8-1"/>
    <property type="nucleotide sequence ID" value="NM_001369506.1"/>
</dbReference>
<dbReference type="RefSeq" id="NP_055908.1">
    <molecule id="Q9NYJ8-1"/>
    <property type="nucleotide sequence ID" value="NM_015093.6"/>
</dbReference>
<dbReference type="RefSeq" id="XP_011533935.1">
    <molecule id="Q9NYJ8-1"/>
    <property type="nucleotide sequence ID" value="XM_011535633.3"/>
</dbReference>
<dbReference type="RefSeq" id="XP_016866080.1">
    <property type="nucleotide sequence ID" value="XM_017010591.1"/>
</dbReference>
<dbReference type="RefSeq" id="XP_016866081.1">
    <molecule id="Q9NYJ8-1"/>
    <property type="nucleotide sequence ID" value="XM_017010592.3"/>
</dbReference>
<dbReference type="RefSeq" id="XP_047274441.1">
    <molecule id="Q9NYJ8-1"/>
    <property type="nucleotide sequence ID" value="XM_047418485.1"/>
</dbReference>
<dbReference type="RefSeq" id="XP_047274442.1">
    <molecule id="Q9NYJ8-1"/>
    <property type="nucleotide sequence ID" value="XM_047418486.1"/>
</dbReference>
<dbReference type="RefSeq" id="XP_047274443.1">
    <molecule id="Q9NYJ8-1"/>
    <property type="nucleotide sequence ID" value="XM_047418487.1"/>
</dbReference>
<dbReference type="RefSeq" id="XP_047274444.1">
    <molecule id="Q9NYJ8-1"/>
    <property type="nucleotide sequence ID" value="XM_047418488.1"/>
</dbReference>
<dbReference type="RefSeq" id="XP_047274445.1">
    <molecule id="Q9NYJ8-1"/>
    <property type="nucleotide sequence ID" value="XM_047418489.1"/>
</dbReference>
<dbReference type="RefSeq" id="XP_047274446.1">
    <molecule id="Q9NYJ8-1"/>
    <property type="nucleotide sequence ID" value="XM_047418490.1"/>
</dbReference>
<dbReference type="RefSeq" id="XP_054210814.1">
    <molecule id="Q9NYJ8-1"/>
    <property type="nucleotide sequence ID" value="XM_054354839.1"/>
</dbReference>
<dbReference type="RefSeq" id="XP_054210815.1">
    <molecule id="Q9NYJ8-1"/>
    <property type="nucleotide sequence ID" value="XM_054354840.1"/>
</dbReference>
<dbReference type="RefSeq" id="XP_054210816.1">
    <molecule id="Q9NYJ8-1"/>
    <property type="nucleotide sequence ID" value="XM_054354841.1"/>
</dbReference>
<dbReference type="RefSeq" id="XP_054210817.1">
    <molecule id="Q9NYJ8-1"/>
    <property type="nucleotide sequence ID" value="XM_054354842.1"/>
</dbReference>
<dbReference type="RefSeq" id="XP_054210818.1">
    <molecule id="Q9NYJ8-1"/>
    <property type="nucleotide sequence ID" value="XM_054354843.1"/>
</dbReference>
<dbReference type="RefSeq" id="XP_054210819.1">
    <molecule id="Q9NYJ8-1"/>
    <property type="nucleotide sequence ID" value="XM_054354844.1"/>
</dbReference>
<dbReference type="RefSeq" id="XP_054210820.1">
    <molecule id="Q9NYJ8-1"/>
    <property type="nucleotide sequence ID" value="XM_054354845.1"/>
</dbReference>
<dbReference type="PDB" id="2DAE">
    <property type="method" value="NMR"/>
    <property type="chains" value="A=7-68"/>
</dbReference>
<dbReference type="PDB" id="2WWZ">
    <property type="method" value="X-ray"/>
    <property type="resolution" value="1.40 A"/>
    <property type="chains" value="C=662-693"/>
</dbReference>
<dbReference type="PDB" id="2WX0">
    <property type="method" value="X-ray"/>
    <property type="resolution" value="2.40 A"/>
    <property type="chains" value="C/G=663-693"/>
</dbReference>
<dbReference type="PDB" id="2WX1">
    <property type="method" value="X-ray"/>
    <property type="resolution" value="3.00 A"/>
    <property type="chains" value="C=663-693"/>
</dbReference>
<dbReference type="PDB" id="9AVT">
    <property type="method" value="X-ray"/>
    <property type="resolution" value="1.50 A"/>
    <property type="chains" value="C=664-693"/>
</dbReference>
<dbReference type="PDB" id="9AVW">
    <property type="method" value="X-ray"/>
    <property type="resolution" value="1.75 A"/>
    <property type="chains" value="C=663-693"/>
</dbReference>
<dbReference type="PDBsum" id="2DAE"/>
<dbReference type="PDBsum" id="2WWZ"/>
<dbReference type="PDBsum" id="2WX0"/>
<dbReference type="PDBsum" id="2WX1"/>
<dbReference type="PDBsum" id="9AVT"/>
<dbReference type="PDBsum" id="9AVW"/>
<dbReference type="BMRB" id="Q9NYJ8"/>
<dbReference type="SMR" id="Q9NYJ8"/>
<dbReference type="BioGRID" id="116740">
    <property type="interactions" value="179"/>
</dbReference>
<dbReference type="ComplexPortal" id="CPX-25729">
    <property type="entry name" value="TAK1-TAB complex, TAB2 variant"/>
</dbReference>
<dbReference type="CORUM" id="Q9NYJ8"/>
<dbReference type="DIP" id="DIP-27525N"/>
<dbReference type="FunCoup" id="Q9NYJ8">
    <property type="interactions" value="3581"/>
</dbReference>
<dbReference type="IntAct" id="Q9NYJ8">
    <property type="interactions" value="81"/>
</dbReference>
<dbReference type="MINT" id="Q9NYJ8"/>
<dbReference type="STRING" id="9606.ENSP00000356426"/>
<dbReference type="ChEMBL" id="CHEMBL4295965"/>
<dbReference type="GlyCosmos" id="Q9NYJ8">
    <property type="glycosylation" value="7 sites, 2 glycans"/>
</dbReference>
<dbReference type="GlyGen" id="Q9NYJ8">
    <property type="glycosylation" value="14 sites, 1 N-linked glycan (1 site), 2 O-linked glycans (13 sites)"/>
</dbReference>
<dbReference type="iPTMnet" id="Q9NYJ8"/>
<dbReference type="PhosphoSitePlus" id="Q9NYJ8"/>
<dbReference type="BioMuta" id="TAB2"/>
<dbReference type="DMDM" id="74753070"/>
<dbReference type="CPTAC" id="CPTAC-1054"/>
<dbReference type="CPTAC" id="CPTAC-909"/>
<dbReference type="jPOST" id="Q9NYJ8"/>
<dbReference type="MassIVE" id="Q9NYJ8"/>
<dbReference type="PaxDb" id="9606-ENSP00000356426"/>
<dbReference type="PeptideAtlas" id="Q9NYJ8"/>
<dbReference type="ProteomicsDB" id="83238">
    <molecule id="Q9NYJ8-1"/>
</dbReference>
<dbReference type="ProteomicsDB" id="83239">
    <molecule id="Q9NYJ8-2"/>
</dbReference>
<dbReference type="Pumba" id="Q9NYJ8"/>
<dbReference type="Antibodypedia" id="19871">
    <property type="antibodies" value="234 antibodies from 36 providers"/>
</dbReference>
<dbReference type="DNASU" id="23118"/>
<dbReference type="Ensembl" id="ENST00000367456.5">
    <molecule id="Q9NYJ8-1"/>
    <property type="protein sequence ID" value="ENSP00000356426.1"/>
    <property type="gene ID" value="ENSG00000055208.20"/>
</dbReference>
<dbReference type="Ensembl" id="ENST00000470466.5">
    <molecule id="Q9NYJ8-2"/>
    <property type="protein sequence ID" value="ENSP00000432709.1"/>
    <property type="gene ID" value="ENSG00000055208.20"/>
</dbReference>
<dbReference type="Ensembl" id="ENST00000637181.2">
    <molecule id="Q9NYJ8-1"/>
    <property type="protein sequence ID" value="ENSP00000490618.1"/>
    <property type="gene ID" value="ENSG00000055208.20"/>
</dbReference>
<dbReference type="GeneID" id="23118"/>
<dbReference type="KEGG" id="hsa:23118"/>
<dbReference type="MANE-Select" id="ENST00000637181.2">
    <property type="protein sequence ID" value="ENSP00000490618.1"/>
    <property type="RefSeq nucleotide sequence ID" value="NM_001292034.3"/>
    <property type="RefSeq protein sequence ID" value="NP_001278963.1"/>
</dbReference>
<dbReference type="UCSC" id="uc063sdy.1">
    <molecule id="Q9NYJ8-1"/>
    <property type="organism name" value="human"/>
</dbReference>
<dbReference type="AGR" id="HGNC:17075"/>
<dbReference type="CTD" id="23118"/>
<dbReference type="DisGeNET" id="23118"/>
<dbReference type="GeneCards" id="TAB2"/>
<dbReference type="HGNC" id="HGNC:17075">
    <property type="gene designation" value="TAB2"/>
</dbReference>
<dbReference type="HPA" id="ENSG00000055208">
    <property type="expression patterns" value="Low tissue specificity"/>
</dbReference>
<dbReference type="MalaCards" id="TAB2"/>
<dbReference type="MIM" id="605101">
    <property type="type" value="gene"/>
</dbReference>
<dbReference type="MIM" id="614980">
    <property type="type" value="phenotype"/>
</dbReference>
<dbReference type="neXtProt" id="NX_Q9NYJ8"/>
<dbReference type="OpenTargets" id="ENSG00000055208"/>
<dbReference type="Orphanet" id="664404">
    <property type="disease" value="6q25.1 microdeletion syndrome"/>
</dbReference>
<dbReference type="Orphanet" id="664401">
    <property type="disease" value="Cardiac anomalies-short stature-joint hypermobility-facial dysmorphism syndrome due to TAB2 mutation"/>
</dbReference>
<dbReference type="PharmGKB" id="PA30605"/>
<dbReference type="VEuPathDB" id="HostDB:ENSG00000055208"/>
<dbReference type="eggNOG" id="ENOG502QRAY">
    <property type="taxonomic scope" value="Eukaryota"/>
</dbReference>
<dbReference type="GeneTree" id="ENSGT00940000158473"/>
<dbReference type="HOGENOM" id="CLU_025065_0_0_1"/>
<dbReference type="InParanoid" id="Q9NYJ8"/>
<dbReference type="OMA" id="GPTFIHH"/>
<dbReference type="OrthoDB" id="6288762at2759"/>
<dbReference type="PAN-GO" id="Q9NYJ8">
    <property type="GO annotations" value="3 GO annotations based on evolutionary models"/>
</dbReference>
<dbReference type="PhylomeDB" id="Q9NYJ8"/>
<dbReference type="TreeFam" id="TF332021"/>
<dbReference type="PathwayCommons" id="Q9NYJ8"/>
<dbReference type="Reactome" id="R-HSA-1251985">
    <property type="pathway name" value="Nuclear signaling by ERBB4"/>
</dbReference>
<dbReference type="Reactome" id="R-HSA-168638">
    <property type="pathway name" value="NOD1/2 Signaling Pathway"/>
</dbReference>
<dbReference type="Reactome" id="R-HSA-202424">
    <property type="pathway name" value="Downstream TCR signaling"/>
</dbReference>
<dbReference type="Reactome" id="R-HSA-2871837">
    <property type="pathway name" value="FCERI mediated NF-kB activation"/>
</dbReference>
<dbReference type="Reactome" id="R-HSA-445989">
    <property type="pathway name" value="TAK1-dependent IKK and NF-kappa-B activation"/>
</dbReference>
<dbReference type="Reactome" id="R-HSA-450302">
    <property type="pathway name" value="activated TAK1 mediates p38 MAPK activation"/>
</dbReference>
<dbReference type="Reactome" id="R-HSA-450321">
    <property type="pathway name" value="JNK (c-Jun kinases) phosphorylation and activation mediated by activated human TAK1"/>
</dbReference>
<dbReference type="Reactome" id="R-HSA-5357956">
    <property type="pathway name" value="TNFR1-induced NF-kappa-B signaling pathway"/>
</dbReference>
<dbReference type="Reactome" id="R-HSA-5607764">
    <property type="pathway name" value="CLEC7A (Dectin-1) signaling"/>
</dbReference>
<dbReference type="Reactome" id="R-HSA-9014325">
    <property type="pathway name" value="TICAM1,TRAF6-dependent induction of TAK1 complex"/>
</dbReference>
<dbReference type="Reactome" id="R-HSA-9020702">
    <property type="pathway name" value="Interleukin-1 signaling"/>
</dbReference>
<dbReference type="Reactome" id="R-HSA-937042">
    <property type="pathway name" value="IRAK2 mediated activation of TAK1 complex"/>
</dbReference>
<dbReference type="Reactome" id="R-HSA-937072">
    <property type="pathway name" value="TRAF6-mediated induction of TAK1 complex within TLR4 complex"/>
</dbReference>
<dbReference type="Reactome" id="R-HSA-9645460">
    <property type="pathway name" value="Alpha-protein kinase 1 signaling pathway"/>
</dbReference>
<dbReference type="Reactome" id="R-HSA-9705671">
    <property type="pathway name" value="SARS-CoV-2 activates/modulates innate and adaptive immune responses"/>
</dbReference>
<dbReference type="Reactome" id="R-HSA-975163">
    <property type="pathway name" value="IRAK2 mediated activation of TAK1 complex upon TLR7/8 or 9 stimulation"/>
</dbReference>
<dbReference type="SignaLink" id="Q9NYJ8"/>
<dbReference type="SIGNOR" id="Q9NYJ8"/>
<dbReference type="BioGRID-ORCS" id="23118">
    <property type="hits" value="18 hits in 1080 CRISPR screens"/>
</dbReference>
<dbReference type="ChiTaRS" id="TAB2">
    <property type="organism name" value="human"/>
</dbReference>
<dbReference type="EvolutionaryTrace" id="Q9NYJ8"/>
<dbReference type="GeneWiki" id="MAP3K7IP2"/>
<dbReference type="GenomeRNAi" id="23118"/>
<dbReference type="Pharos" id="Q9NYJ8">
    <property type="development level" value="Tbio"/>
</dbReference>
<dbReference type="PRO" id="PR:Q9NYJ8"/>
<dbReference type="Proteomes" id="UP000005640">
    <property type="component" value="Chromosome 6"/>
</dbReference>
<dbReference type="RNAct" id="Q9NYJ8">
    <property type="molecule type" value="protein"/>
</dbReference>
<dbReference type="Bgee" id="ENSG00000055208">
    <property type="expression patterns" value="Expressed in parotid gland and 214 other cell types or tissues"/>
</dbReference>
<dbReference type="ExpressionAtlas" id="Q9NYJ8">
    <property type="expression patterns" value="baseline and differential"/>
</dbReference>
<dbReference type="GO" id="GO:0005737">
    <property type="term" value="C:cytoplasm"/>
    <property type="evidence" value="ECO:0000314"/>
    <property type="project" value="UniProt"/>
</dbReference>
<dbReference type="GO" id="GO:0005829">
    <property type="term" value="C:cytosol"/>
    <property type="evidence" value="ECO:0000304"/>
    <property type="project" value="Reactome"/>
</dbReference>
<dbReference type="GO" id="GO:0010008">
    <property type="term" value="C:endosome membrane"/>
    <property type="evidence" value="ECO:0000304"/>
    <property type="project" value="Reactome"/>
</dbReference>
<dbReference type="GO" id="GO:0005765">
    <property type="term" value="C:lysosomal membrane"/>
    <property type="evidence" value="ECO:0007669"/>
    <property type="project" value="UniProtKB-SubCell"/>
</dbReference>
<dbReference type="GO" id="GO:0005654">
    <property type="term" value="C:nucleoplasm"/>
    <property type="evidence" value="ECO:0000304"/>
    <property type="project" value="Reactome"/>
</dbReference>
<dbReference type="GO" id="GO:0005886">
    <property type="term" value="C:plasma membrane"/>
    <property type="evidence" value="ECO:0000304"/>
    <property type="project" value="Reactome"/>
</dbReference>
<dbReference type="GO" id="GO:0070530">
    <property type="term" value="F:K63-linked polyubiquitin modification-dependent protein binding"/>
    <property type="evidence" value="ECO:0000314"/>
    <property type="project" value="UniProtKB"/>
</dbReference>
<dbReference type="GO" id="GO:0060090">
    <property type="term" value="F:molecular adaptor activity"/>
    <property type="evidence" value="ECO:0000314"/>
    <property type="project" value="UniProt"/>
</dbReference>
<dbReference type="GO" id="GO:0043130">
    <property type="term" value="F:ubiquitin binding"/>
    <property type="evidence" value="ECO:0007669"/>
    <property type="project" value="InterPro"/>
</dbReference>
<dbReference type="GO" id="GO:0008270">
    <property type="term" value="F:zinc ion binding"/>
    <property type="evidence" value="ECO:0000314"/>
    <property type="project" value="UniProtKB"/>
</dbReference>
<dbReference type="GO" id="GO:0042742">
    <property type="term" value="P:defense response to bacterium"/>
    <property type="evidence" value="ECO:0000314"/>
    <property type="project" value="UniProt"/>
</dbReference>
<dbReference type="GO" id="GO:0007507">
    <property type="term" value="P:heart development"/>
    <property type="evidence" value="ECO:0000315"/>
    <property type="project" value="UniProtKB"/>
</dbReference>
<dbReference type="GO" id="GO:0006954">
    <property type="term" value="P:inflammatory response"/>
    <property type="evidence" value="ECO:0000314"/>
    <property type="project" value="UniProt"/>
</dbReference>
<dbReference type="GO" id="GO:0010507">
    <property type="term" value="P:negative regulation of autophagy"/>
    <property type="evidence" value="ECO:0000304"/>
    <property type="project" value="ParkinsonsUK-UCL"/>
</dbReference>
<dbReference type="GO" id="GO:0038061">
    <property type="term" value="P:non-canonical NF-kappaB signal transduction"/>
    <property type="evidence" value="ECO:0000314"/>
    <property type="project" value="UniProt"/>
</dbReference>
<dbReference type="GO" id="GO:0043123">
    <property type="term" value="P:positive regulation of canonical NF-kappaB signal transduction"/>
    <property type="evidence" value="ECO:0000314"/>
    <property type="project" value="UniProtKB"/>
</dbReference>
<dbReference type="GO" id="GO:0045860">
    <property type="term" value="P:positive regulation of protein kinase activity"/>
    <property type="evidence" value="ECO:0000314"/>
    <property type="project" value="UniProtKB"/>
</dbReference>
<dbReference type="GO" id="GO:0032496">
    <property type="term" value="P:response to lipopolysaccharide"/>
    <property type="evidence" value="ECO:0000314"/>
    <property type="project" value="ARUK-UCL"/>
</dbReference>
<dbReference type="CDD" id="cd14362">
    <property type="entry name" value="CUE_TAB2_TAB3"/>
    <property type="match status" value="1"/>
</dbReference>
<dbReference type="FunFam" id="2.30.30.380:FF:000006">
    <property type="entry name" value="TGF-beta activated kinase 1 (MAP3K7) binding protein 2"/>
    <property type="match status" value="1"/>
</dbReference>
<dbReference type="FunFam" id="1.10.8.10:FF:000025">
    <property type="entry name" value="TGF-beta-activated kinase 1 and MAP3K7-binding protein 3"/>
    <property type="match status" value="1"/>
</dbReference>
<dbReference type="Gene3D" id="1.10.8.10">
    <property type="entry name" value="DNA helicase RuvA subunit, C-terminal domain"/>
    <property type="match status" value="1"/>
</dbReference>
<dbReference type="Gene3D" id="2.30.30.380">
    <property type="entry name" value="Zn-finger domain of Sec23/24"/>
    <property type="match status" value="1"/>
</dbReference>
<dbReference type="InterPro" id="IPR003892">
    <property type="entry name" value="CUE"/>
</dbReference>
<dbReference type="InterPro" id="IPR041911">
    <property type="entry name" value="TAB2/3_CUE"/>
</dbReference>
<dbReference type="InterPro" id="IPR001876">
    <property type="entry name" value="Znf_RanBP2"/>
</dbReference>
<dbReference type="InterPro" id="IPR036443">
    <property type="entry name" value="Znf_RanBP2_sf"/>
</dbReference>
<dbReference type="PANTHER" id="PTHR46253:SF2">
    <property type="entry name" value="TGF-BETA-ACTIVATED KINASE 1 AND MAP3K7-BINDING PROTEIN 2"/>
    <property type="match status" value="1"/>
</dbReference>
<dbReference type="PANTHER" id="PTHR46253">
    <property type="entry name" value="TGF-BETA-ACTIVATED KINASE 1 AND MAP3K7-BINDING PROTEIN TAB"/>
    <property type="match status" value="1"/>
</dbReference>
<dbReference type="Pfam" id="PF02845">
    <property type="entry name" value="CUE"/>
    <property type="match status" value="1"/>
</dbReference>
<dbReference type="SMART" id="SM00546">
    <property type="entry name" value="CUE"/>
    <property type="match status" value="1"/>
</dbReference>
<dbReference type="SMART" id="SM00547">
    <property type="entry name" value="ZnF_RBZ"/>
    <property type="match status" value="1"/>
</dbReference>
<dbReference type="SUPFAM" id="SSF90209">
    <property type="entry name" value="Ran binding protein zinc finger-like"/>
    <property type="match status" value="1"/>
</dbReference>
<dbReference type="PROSITE" id="PS51140">
    <property type="entry name" value="CUE"/>
    <property type="match status" value="1"/>
</dbReference>
<dbReference type="PROSITE" id="PS01358">
    <property type="entry name" value="ZF_RANBP2_1"/>
    <property type="match status" value="1"/>
</dbReference>
<dbReference type="PROSITE" id="PS50199">
    <property type="entry name" value="ZF_RANBP2_2"/>
    <property type="match status" value="1"/>
</dbReference>
<accession>Q9NYJ8</accession>
<accession>B2RCC4</accession>
<accession>E1P5A0</accession>
<accession>O94838</accession>
<accession>Q6I9W8</accession>
<accession>Q76N06</accession>
<accession>Q9UFP7</accession>
<protein>
    <recommendedName>
        <fullName evidence="32">TGF-beta-activated kinase 1 and MAP3K7-binding protein 2</fullName>
    </recommendedName>
    <alternativeName>
        <fullName>Mitogen-activated protein kinase kinase kinase 7-interacting protein 2</fullName>
    </alternativeName>
    <alternativeName>
        <fullName evidence="27">TAK1-binding protein 2</fullName>
        <shortName evidence="27">TAB-2</shortName>
    </alternativeName>
    <alternativeName>
        <fullName evidence="27">TGF-beta-activated kinase 1-binding protein 2</fullName>
    </alternativeName>
</protein>
<proteinExistence type="evidence at protein level"/>
<sequence length="693" mass="76494">MAQGSHQIDFQVLHDLRQKFPEVPEVVVSRCMLQNNNNLDACCAVLSQESTRYLYGEGDLNFSDDSGISGLRNHMTSLNLDLQSQNIYHHGREGSRMNGSRTLTHSISDGQLQGGQSNSELFQQEPQTAPAQVPQGFNVFGMSSSSGASNSAPHLGFHLGSKGTSSLSQQTPRFNPIMVTLAPNIQTGRNTPTSLHIHGVPPPVLNSPQGNSIYIRPYITTPGGTTRQTQQHSGWVSQFNPMNPQQVYQPSQPGPWTTCPASNPLSHTSSQQPNQQGHQTSHVYMPISSPTTSQPPTIHSSGSSQSSAHSQYNIQNISTGPRKNQIEIKLEPPQRNNSSKLRSSGPRTSSTSSSVNSQTLNRNQPTVYIAASPPNTDELMSRSQPKVYISANAATGDEQVMRNQPTLFISTNSGASAASRNMSGQVSMGPAFIHHHPPKSRAIGNNSATSPRVVVTQPNTKYTFKITVSPNKPPAVSPGVVSPTFELTNLLNHPDHYVETENIQHLTDPTLAHVDRISETRKLSMGSDDAAYTQALLVHQKARMERLQRELEIQKKKLDKLKSEVNEMENNLTRRRLKRSNSISQIPSLEEMQQLRSCNRQLQIDIDCLTKEIDLFQARGPHFNPSAIHNFYDNIGFVGPVPPKPKDQRSIIKTPKTQDTEDDEGAQWNCTACTFLNHPALIRCEQCEMPRHF</sequence>
<feature type="chain" id="PRO_0000225695" description="TGF-beta-activated kinase 1 and MAP3K7-binding protein 2">
    <location>
        <begin position="1"/>
        <end position="693"/>
    </location>
</feature>
<feature type="domain" description="CUE" evidence="4">
    <location>
        <begin position="8"/>
        <end position="51"/>
    </location>
</feature>
<feature type="zinc finger region" description="RanBP2-type" evidence="3">
    <location>
        <begin position="663"/>
        <end position="693"/>
    </location>
</feature>
<feature type="region of interest" description="Disordered" evidence="5">
    <location>
        <begin position="91"/>
        <end position="130"/>
    </location>
</feature>
<feature type="region of interest" description="Disordered" evidence="5">
    <location>
        <begin position="219"/>
        <end position="310"/>
    </location>
</feature>
<feature type="region of interest" description="Disordered" evidence="5">
    <location>
        <begin position="330"/>
        <end position="381"/>
    </location>
</feature>
<feature type="region of interest" description="Disordered" evidence="5">
    <location>
        <begin position="642"/>
        <end position="663"/>
    </location>
</feature>
<feature type="region of interest" description="Interaction with polyubiquitin" evidence="15">
    <location>
        <begin position="675"/>
        <end position="685"/>
    </location>
</feature>
<feature type="coiled-coil region" evidence="2">
    <location>
        <begin position="532"/>
        <end position="619"/>
    </location>
</feature>
<feature type="compositionally biased region" description="Polar residues" evidence="5">
    <location>
        <begin position="97"/>
        <end position="130"/>
    </location>
</feature>
<feature type="compositionally biased region" description="Low complexity" evidence="5">
    <location>
        <begin position="220"/>
        <end position="231"/>
    </location>
</feature>
<feature type="compositionally biased region" description="Polar residues" evidence="5">
    <location>
        <begin position="232"/>
        <end position="282"/>
    </location>
</feature>
<feature type="compositionally biased region" description="Low complexity" evidence="5">
    <location>
        <begin position="286"/>
        <end position="310"/>
    </location>
</feature>
<feature type="compositionally biased region" description="Low complexity" evidence="5">
    <location>
        <begin position="343"/>
        <end position="359"/>
    </location>
</feature>
<feature type="modified residue" description="Asymmetric dimethylarginine" evidence="38">
    <location>
        <position position="173"/>
    </location>
</feature>
<feature type="modified residue" description="Phosphoserine" evidence="35">
    <location>
        <position position="372"/>
    </location>
</feature>
<feature type="modified residue" description="Phosphoserine" evidence="36 37">
    <location>
        <position position="450"/>
    </location>
</feature>
<feature type="modified residue" description="Phosphoserine" evidence="39">
    <location>
        <position position="482"/>
    </location>
</feature>
<feature type="modified residue" description="Phosphoserine" evidence="36">
    <location>
        <position position="524"/>
    </location>
</feature>
<feature type="modified residue" description="Phosphoserine" evidence="37">
    <location>
        <position position="582"/>
    </location>
</feature>
<feature type="modified residue" description="(Microbial infection) S-methylcysteine" evidence="18 20">
    <location>
        <position position="673"/>
    </location>
</feature>
<feature type="cross-link" description="Glycyl lysine isopeptide (Lys-Gly) (interchain with G-Cter in SUMO)" evidence="24">
    <location>
        <position position="329"/>
    </location>
</feature>
<feature type="cross-link" description="Glycyl lysine isopeptide (Lys-Gly) (interchain with G-Cter in SUMO)" evidence="24">
    <location>
        <position position="562"/>
    </location>
</feature>
<feature type="cross-link" description="Glycyl lysine isopeptide (Lys-Gly) (interchain with G-Cter in ubiquitin)" evidence="26">
    <location>
        <position position="611"/>
    </location>
</feature>
<feature type="splice variant" id="VSP_017419" description="In isoform 2." evidence="28 29 31">
    <original>AL</original>
    <variation>DI</variation>
    <location>
        <begin position="535"/>
        <end position="536"/>
    </location>
</feature>
<feature type="splice variant" id="VSP_017420" description="In isoform 2." evidence="28 29 31">
    <location>
        <begin position="537"/>
        <end position="693"/>
    </location>
</feature>
<feature type="sequence variant" id="VAR_063774" description="In CHTD2; dbSNP:rs267607101." evidence="16">
    <original>P</original>
    <variation>S</variation>
    <location>
        <position position="208"/>
    </location>
</feature>
<feature type="sequence variant" id="VAR_063775" description="In CHTD2; dbSNP:rs267607100." evidence="16">
    <original>Q</original>
    <variation>K</variation>
    <location>
        <position position="230"/>
    </location>
</feature>
<feature type="sequence variant" id="VAR_077348" description="Found in an patient with a form of frontometaphyseal dysplasia; uncertain significance; dbSNP:rs886039238." evidence="21">
    <original>E</original>
    <variation>K</variation>
    <location>
        <position position="569"/>
    </location>
</feature>
<feature type="mutagenesis site" description="Loss of TRIM60-mediated SUMOylation; when associated with R-562." evidence="24">
    <original>K</original>
    <variation>R</variation>
    <location>
        <position position="329"/>
    </location>
</feature>
<feature type="mutagenesis site" description="Loss of TRIM60-mediated SUMOylation; when associated with R-329." evidence="24">
    <original>K</original>
    <variation>R</variation>
    <location>
        <position position="562"/>
    </location>
</feature>
<feature type="mutagenesis site" description="Loss of TRIM35-mediated ubiquitination." evidence="26">
    <original>K</original>
    <variation>R</variation>
    <location>
        <position position="611"/>
    </location>
</feature>
<feature type="mutagenesis site" description="Disrupted zinc-finger; abolished methylation at C-673." evidence="18">
    <original>C</original>
    <variation>S</variation>
    <location>
        <position position="670"/>
    </location>
</feature>
<feature type="mutagenesis site" description="Abolished Cys methylation and ability to bind 'Lys-63'-linked ubiquitin." evidence="18">
    <original>C</original>
    <variation>L</variation>
    <variation>M</variation>
    <location>
        <position position="673"/>
    </location>
</feature>
<feature type="mutagenesis site" description="Abolishes ubiquitin binding." evidence="15">
    <original>F</original>
    <variation>A</variation>
    <location>
        <position position="675"/>
    </location>
</feature>
<feature type="mutagenesis site" description="Abolishes ubiquitin binding." evidence="15">
    <original>H</original>
    <variation>A</variation>
    <location>
        <position position="678"/>
    </location>
</feature>
<feature type="mutagenesis site" description="Abolishes ubiquitin binding." evidence="15">
    <original>L</original>
    <variation>A</variation>
    <location>
        <position position="681"/>
    </location>
</feature>
<feature type="mutagenesis site" description="Disrupted zinc-finger; abolished methylation at C-673." evidence="18">
    <original>C</original>
    <variation>S</variation>
    <location>
        <position position="684"/>
    </location>
</feature>
<feature type="mutagenesis site" description="Abolishes ubiquitin binding." evidence="15">
    <original>E</original>
    <variation>A</variation>
    <location>
        <position position="685"/>
    </location>
</feature>
<feature type="mutagenesis site" description="Disrupted zinc-finger; abolished methylation at C-673." evidence="18">
    <original>C</original>
    <variation>S</variation>
    <location>
        <position position="687"/>
    </location>
</feature>
<feature type="sequence conflict" description="In Ref. 5; CAG33668." evidence="32" ref="5">
    <original>H</original>
    <variation>R</variation>
    <location>
        <position position="196"/>
    </location>
</feature>
<feature type="helix" evidence="40">
    <location>
        <begin position="10"/>
        <end position="19"/>
    </location>
</feature>
<feature type="strand" evidence="40">
    <location>
        <begin position="20"/>
        <end position="23"/>
    </location>
</feature>
<feature type="helix" evidence="40">
    <location>
        <begin position="25"/>
        <end position="32"/>
    </location>
</feature>
<feature type="turn" evidence="40">
    <location>
        <begin position="33"/>
        <end position="36"/>
    </location>
</feature>
<feature type="helix" evidence="40">
    <location>
        <begin position="40"/>
        <end position="53"/>
    </location>
</feature>
<feature type="turn" evidence="40">
    <location>
        <begin position="54"/>
        <end position="56"/>
    </location>
</feature>
<feature type="turn" evidence="41">
    <location>
        <begin position="671"/>
        <end position="673"/>
    </location>
</feature>
<feature type="turn" evidence="41">
    <location>
        <begin position="685"/>
        <end position="687"/>
    </location>
</feature>
<keyword id="KW-0002">3D-structure</keyword>
<keyword id="KW-0025">Alternative splicing</keyword>
<keyword id="KW-0160">Chromosomal rearrangement</keyword>
<keyword id="KW-0175">Coiled coil</keyword>
<keyword id="KW-0963">Cytoplasm</keyword>
<keyword id="KW-0225">Disease variant</keyword>
<keyword id="KW-0967">Endosome</keyword>
<keyword id="KW-1017">Isopeptide bond</keyword>
<keyword id="KW-0458">Lysosome</keyword>
<keyword id="KW-0472">Membrane</keyword>
<keyword id="KW-0479">Metal-binding</keyword>
<keyword id="KW-0488">Methylation</keyword>
<keyword id="KW-0597">Phosphoprotein</keyword>
<keyword id="KW-1267">Proteomics identification</keyword>
<keyword id="KW-1185">Reference proteome</keyword>
<keyword id="KW-0832">Ubl conjugation</keyword>
<keyword id="KW-0862">Zinc</keyword>
<keyword id="KW-0863">Zinc-finger</keyword>